<organism>
    <name type="scientific">Macaca fascicularis</name>
    <name type="common">Crab-eating macaque</name>
    <name type="synonym">Cynomolgus monkey</name>
    <dbReference type="NCBI Taxonomy" id="9541"/>
    <lineage>
        <taxon>Eukaryota</taxon>
        <taxon>Metazoa</taxon>
        <taxon>Chordata</taxon>
        <taxon>Craniata</taxon>
        <taxon>Vertebrata</taxon>
        <taxon>Euteleostomi</taxon>
        <taxon>Mammalia</taxon>
        <taxon>Eutheria</taxon>
        <taxon>Euarchontoglires</taxon>
        <taxon>Primates</taxon>
        <taxon>Haplorrhini</taxon>
        <taxon>Catarrhini</taxon>
        <taxon>Cercopithecidae</taxon>
        <taxon>Cercopithecinae</taxon>
        <taxon>Macaca</taxon>
    </lineage>
</organism>
<dbReference type="EMBL" id="AB062931">
    <property type="protein sequence ID" value="BAB60726.1"/>
    <property type="molecule type" value="mRNA"/>
</dbReference>
<dbReference type="RefSeq" id="NP_001272325.1">
    <property type="nucleotide sequence ID" value="NM_001285396.1"/>
</dbReference>
<dbReference type="RefSeq" id="XP_045218905.1">
    <property type="nucleotide sequence ID" value="XM_045362970.2"/>
</dbReference>
<dbReference type="SMR" id="Q95KE2"/>
<dbReference type="STRING" id="9541.ENSMFAP00000035119"/>
<dbReference type="Ensembl" id="ENSMFAT00000009354.2">
    <property type="protein sequence ID" value="ENSMFAP00000035119.1"/>
    <property type="gene ID" value="ENSMFAG00000004019.2"/>
</dbReference>
<dbReference type="GeneID" id="102130972"/>
<dbReference type="VEuPathDB" id="HostDB:ENSMFAG00000004019"/>
<dbReference type="eggNOG" id="KOG4303">
    <property type="taxonomic scope" value="Eukaryota"/>
</dbReference>
<dbReference type="GeneTree" id="ENSGT00490000043380"/>
<dbReference type="OMA" id="MKWTHIA"/>
<dbReference type="Proteomes" id="UP000233100">
    <property type="component" value="Chromosome 10"/>
</dbReference>
<dbReference type="Bgee" id="ENSMFAG00000004019">
    <property type="expression patterns" value="Expressed in frontal cortex and 2 other cell types or tissues"/>
</dbReference>
<dbReference type="GO" id="GO:0009986">
    <property type="term" value="C:cell surface"/>
    <property type="evidence" value="ECO:0007669"/>
    <property type="project" value="Ensembl"/>
</dbReference>
<dbReference type="GO" id="GO:0051286">
    <property type="term" value="C:cell tip"/>
    <property type="evidence" value="ECO:0007669"/>
    <property type="project" value="Ensembl"/>
</dbReference>
<dbReference type="GO" id="GO:0044316">
    <property type="term" value="C:cone cell pedicle"/>
    <property type="evidence" value="ECO:0007669"/>
    <property type="project" value="Ensembl"/>
</dbReference>
<dbReference type="GO" id="GO:0030659">
    <property type="term" value="C:cytoplasmic vesicle membrane"/>
    <property type="evidence" value="ECO:0007669"/>
    <property type="project" value="UniProtKB-SubCell"/>
</dbReference>
<dbReference type="GO" id="GO:0044292">
    <property type="term" value="C:dendrite terminus"/>
    <property type="evidence" value="ECO:0007669"/>
    <property type="project" value="Ensembl"/>
</dbReference>
<dbReference type="GO" id="GO:0060077">
    <property type="term" value="C:inhibitory synapse"/>
    <property type="evidence" value="ECO:0007669"/>
    <property type="project" value="Ensembl"/>
</dbReference>
<dbReference type="GO" id="GO:0098793">
    <property type="term" value="C:presynapse"/>
    <property type="evidence" value="ECO:0000250"/>
    <property type="project" value="UniProtKB"/>
</dbReference>
<dbReference type="GO" id="GO:0048786">
    <property type="term" value="C:presynaptic active zone"/>
    <property type="evidence" value="ECO:0007669"/>
    <property type="project" value="Ensembl"/>
</dbReference>
<dbReference type="GO" id="GO:0008021">
    <property type="term" value="C:synaptic vesicle"/>
    <property type="evidence" value="ECO:0000250"/>
    <property type="project" value="UniProtKB"/>
</dbReference>
<dbReference type="GO" id="GO:0005774">
    <property type="term" value="C:vacuolar membrane"/>
    <property type="evidence" value="ECO:0007669"/>
    <property type="project" value="TreeGrafter"/>
</dbReference>
<dbReference type="GO" id="GO:0015185">
    <property type="term" value="F:gamma-aminobutyric acid transmembrane transporter activity"/>
    <property type="evidence" value="ECO:0000250"/>
    <property type="project" value="UniProtKB"/>
</dbReference>
<dbReference type="GO" id="GO:0140800">
    <property type="term" value="F:gamma-aminobutyric acid:proton antiporter activity"/>
    <property type="evidence" value="ECO:0000250"/>
    <property type="project" value="UniProtKB"/>
</dbReference>
<dbReference type="GO" id="GO:0015187">
    <property type="term" value="F:glycine transmembrane transporter activity"/>
    <property type="evidence" value="ECO:0000250"/>
    <property type="project" value="UniProtKB"/>
</dbReference>
<dbReference type="GO" id="GO:0140799">
    <property type="term" value="F:glycine:proton antiporter activity"/>
    <property type="evidence" value="ECO:0000250"/>
    <property type="project" value="UniProtKB"/>
</dbReference>
<dbReference type="GO" id="GO:0015179">
    <property type="term" value="F:L-amino acid transmembrane transporter activity"/>
    <property type="evidence" value="ECO:0007669"/>
    <property type="project" value="TreeGrafter"/>
</dbReference>
<dbReference type="GO" id="GO:0001762">
    <property type="term" value="P:beta-alanine transport"/>
    <property type="evidence" value="ECO:0000250"/>
    <property type="project" value="UniProtKB"/>
</dbReference>
<dbReference type="GO" id="GO:0051939">
    <property type="term" value="P:gamma-aminobutyric acid import"/>
    <property type="evidence" value="ECO:0000250"/>
    <property type="project" value="UniProtKB"/>
</dbReference>
<dbReference type="GO" id="GO:0015812">
    <property type="term" value="P:gamma-aminobutyric acid transport"/>
    <property type="evidence" value="ECO:0000250"/>
    <property type="project" value="UniProtKB"/>
</dbReference>
<dbReference type="GO" id="GO:0015816">
    <property type="term" value="P:glycine transport"/>
    <property type="evidence" value="ECO:0000250"/>
    <property type="project" value="UniProtKB"/>
</dbReference>
<dbReference type="GO" id="GO:0006836">
    <property type="term" value="P:neurotransmitter transport"/>
    <property type="evidence" value="ECO:0007669"/>
    <property type="project" value="UniProtKB-KW"/>
</dbReference>
<dbReference type="FunFam" id="1.20.1740.10:FF:000062">
    <property type="entry name" value="Vesicular inhibitory amino acid transporter"/>
    <property type="match status" value="1"/>
</dbReference>
<dbReference type="InterPro" id="IPR013057">
    <property type="entry name" value="AA_transpt_TM"/>
</dbReference>
<dbReference type="PANTHER" id="PTHR22950">
    <property type="entry name" value="AMINO ACID TRANSPORTER"/>
    <property type="match status" value="1"/>
</dbReference>
<dbReference type="PANTHER" id="PTHR22950:SF689">
    <property type="entry name" value="VESICULAR INHIBITORY AMINO ACID TRANSPORTER"/>
    <property type="match status" value="1"/>
</dbReference>
<dbReference type="Pfam" id="PF01490">
    <property type="entry name" value="Aa_trans"/>
    <property type="match status" value="1"/>
</dbReference>
<comment type="function">
    <text evidence="1 2">Antiporter that exchanges vesicular protons for cytosolic 4-aminobutanoate or to a lesser extend glycine, thus allowing their secretion from nerve terminals. The transport is equally dependent on the chemical and electrical components of the proton gradient (By similarity). May also transport beta-alanine (By similarity). Acidification of GABAergic synaptic vesicles is a prerequisite for 4-aminobutanoate uptake (By similarity).</text>
</comment>
<comment type="catalytic activity">
    <reaction evidence="2">
        <text>4-aminobutanoate(out) + n H(+)(in) = 4-aminobutanoate(in) + n H(+)(out)</text>
        <dbReference type="Rhea" id="RHEA:70979"/>
        <dbReference type="ChEBI" id="CHEBI:15378"/>
        <dbReference type="ChEBI" id="CHEBI:59888"/>
    </reaction>
</comment>
<comment type="catalytic activity">
    <reaction evidence="2">
        <text>glycine(out) + n H(+)(in) = glycine(in) + n H(+)(out)</text>
        <dbReference type="Rhea" id="RHEA:70983"/>
        <dbReference type="ChEBI" id="CHEBI:15378"/>
        <dbReference type="ChEBI" id="CHEBI:57305"/>
    </reaction>
</comment>
<comment type="catalytic activity">
    <reaction evidence="1">
        <text>beta-alanine(out) + n H(+)(in) = beta-alanine(in) + n H(+)(out)</text>
        <dbReference type="Rhea" id="RHEA:70987"/>
        <dbReference type="ChEBI" id="CHEBI:15378"/>
        <dbReference type="ChEBI" id="CHEBI:57966"/>
    </reaction>
</comment>
<comment type="subcellular location">
    <subcellularLocation>
        <location evidence="1">Cytoplasmic vesicle membrane</location>
        <topology evidence="4">Multi-pass membrane protein</topology>
    </subcellularLocation>
    <subcellularLocation>
        <location evidence="2">Presynapse</location>
    </subcellularLocation>
    <text evidence="1">Presents in glycine-, GABA- or GABA- and glycine-containing boutons.</text>
</comment>
<comment type="similarity">
    <text evidence="6">Belongs to the amino acid/polyamine transporter 2 family.</text>
</comment>
<comment type="caution">
    <text evidence="1 2">Juge et al. shows that SLC32A1 is a symporter of both 4-aminobutanoate or glycine or beta-alanine with Cl(-) that operates according an electrical gradient without the need for a chemical gradient (By similarity). However Farsi et al. and Egashira et al. confirm that SLC32A1 is an antiporter that exchanges vesicular protons for cytosolic 4-aminobutanoate or glycine and exclude any coupling with chloride (By similarity).</text>
</comment>
<protein>
    <recommendedName>
        <fullName evidence="3">Vesicular inhibitory amino acid transporter</fullName>
    </recommendedName>
    <alternativeName>
        <fullName>GABA and glycine transporter</fullName>
    </alternativeName>
    <alternativeName>
        <fullName>Solute carrier family 32 member 1</fullName>
    </alternativeName>
    <alternativeName>
        <fullName>Vesicular GABA transporter</fullName>
    </alternativeName>
</protein>
<feature type="chain" id="PRO_0000093821" description="Vesicular inhibitory amino acid transporter">
    <location>
        <begin position="1"/>
        <end position="525"/>
    </location>
</feature>
<feature type="topological domain" description="Cytoplasmic" evidence="1">
    <location>
        <begin position="1"/>
        <end position="132"/>
    </location>
</feature>
<feature type="transmembrane region" description="Helical" evidence="4">
    <location>
        <begin position="133"/>
        <end position="153"/>
    </location>
</feature>
<feature type="topological domain" description="Lumenal, vesicle" evidence="1">
    <location>
        <begin position="154"/>
        <end position="204"/>
    </location>
</feature>
<feature type="transmembrane region" description="Helical" evidence="4">
    <location>
        <begin position="205"/>
        <end position="225"/>
    </location>
</feature>
<feature type="topological domain" description="Cytoplasmic" evidence="1">
    <location>
        <begin position="226"/>
        <end position="265"/>
    </location>
</feature>
<feature type="transmembrane region" description="Helical" evidence="4">
    <location>
        <begin position="266"/>
        <end position="286"/>
    </location>
</feature>
<feature type="topological domain" description="Lumenal, vesicle" evidence="1">
    <location>
        <begin position="287"/>
        <end position="305"/>
    </location>
</feature>
<feature type="transmembrane region" description="Helical" evidence="4">
    <location>
        <begin position="306"/>
        <end position="326"/>
    </location>
</feature>
<feature type="topological domain" description="Cytoplasmic" evidence="1">
    <location>
        <begin position="327"/>
        <end position="341"/>
    </location>
</feature>
<feature type="transmembrane region" description="Helical" evidence="4">
    <location>
        <begin position="342"/>
        <end position="362"/>
    </location>
</feature>
<feature type="topological domain" description="Lumenal, vesicle" evidence="1">
    <location>
        <begin position="363"/>
        <end position="383"/>
    </location>
</feature>
<feature type="transmembrane region" description="Helical" evidence="4">
    <location>
        <begin position="384"/>
        <end position="404"/>
    </location>
</feature>
<feature type="topological domain" description="Cytoplasmic" evidence="1">
    <location>
        <begin position="405"/>
        <end position="438"/>
    </location>
</feature>
<feature type="transmembrane region" description="Helical" evidence="4">
    <location>
        <begin position="439"/>
        <end position="459"/>
    </location>
</feature>
<feature type="topological domain" description="Lumenal, vesicle" evidence="1">
    <location>
        <begin position="460"/>
        <end position="461"/>
    </location>
</feature>
<feature type="transmembrane region" description="Helical" evidence="4">
    <location>
        <begin position="462"/>
        <end position="482"/>
    </location>
</feature>
<feature type="topological domain" description="Cytoplasmic" evidence="1">
    <location>
        <begin position="483"/>
        <end position="489"/>
    </location>
</feature>
<feature type="transmembrane region" description="Helical" evidence="4">
    <location>
        <begin position="490"/>
        <end position="510"/>
    </location>
</feature>
<feature type="topological domain" description="Lumenal, vesicle" evidence="1">
    <location>
        <begin position="511"/>
        <end position="525"/>
    </location>
</feature>
<feature type="region of interest" description="Disordered" evidence="5">
    <location>
        <begin position="69"/>
        <end position="111"/>
    </location>
</feature>
<feature type="modified residue" description="3'-nitrotyrosine" evidence="2">
    <location>
        <position position="186"/>
    </location>
</feature>
<evidence type="ECO:0000250" key="1">
    <source>
        <dbReference type="UniProtKB" id="O35458"/>
    </source>
</evidence>
<evidence type="ECO:0000250" key="2">
    <source>
        <dbReference type="UniProtKB" id="O35633"/>
    </source>
</evidence>
<evidence type="ECO:0000250" key="3">
    <source>
        <dbReference type="UniProtKB" id="Q9H598"/>
    </source>
</evidence>
<evidence type="ECO:0000255" key="4"/>
<evidence type="ECO:0000256" key="5">
    <source>
        <dbReference type="SAM" id="MobiDB-lite"/>
    </source>
</evidence>
<evidence type="ECO:0000305" key="6"/>
<accession>Q95KE2</accession>
<name>VIAAT_MACFA</name>
<reference key="1">
    <citation type="submission" date="2001-06" db="EMBL/GenBank/DDBJ databases">
        <title>Isolation of full-length cDNA clones from macaque brain cDNA libraries.</title>
        <authorList>
            <person name="Osada N."/>
            <person name="Hida M."/>
            <person name="Kusuda J."/>
            <person name="Tanuma R."/>
            <person name="Iseki K."/>
            <person name="Hirai M."/>
            <person name="Terao K."/>
            <person name="Suzuki Y."/>
            <person name="Sugano S."/>
            <person name="Hashimoto K."/>
        </authorList>
    </citation>
    <scope>NUCLEOTIDE SEQUENCE [LARGE SCALE MRNA]</scope>
    <source>
        <tissue>Brain cortex</tissue>
    </source>
</reference>
<sequence length="525" mass="57393">MATLLRSKLSNVATSVSNKSQAKVSGMFARMGFQAATDEEAVGFAHCDDLDFEHRQGLQMDILKAEGEPCGDEGAEPPVEGDIHYQRGSGAPLPPSGSKDQVGAGGEFGGHDKPKITAWEAGWNVTNAIQGMFVLGLPYAILHGGYLGLFLIIFAAVVCCYTGKILIACLYEENEDGEVVRVRDSYVAIANACCAPRFPTLGGRVVNVAQIIELVMTCILYVVVSGNLMYNSFPGLPVSQKSWSIIATAVLLPCAFLKNLKAVSKFSLLCTLAHFVINILVIAYCLSRARDWAWEKVKFYIDVKKFPISIGIIVFSYTSQIFLPSLEGNMQQPSEFHCMMNWTHIAACVLKGLFALVAYLTWADETKEVITDNLPGSIRAVVNIFLVAKALLSYPLPFFAAVEVLEKSLFQEGSRAFFPACYGGDGRLKSWGLTLRCALVVFTLLMAIYVPHFALLMGLTGSLTGAGLCFLLPSLFHLRLLWRKLLWHQVFFDVAIFVIGGICSVSGFVHSLEGLIEAYRTNAED</sequence>
<keyword id="KW-0966">Cell projection</keyword>
<keyword id="KW-0968">Cytoplasmic vesicle</keyword>
<keyword id="KW-0472">Membrane</keyword>
<keyword id="KW-0532">Neurotransmitter transport</keyword>
<keyword id="KW-0944">Nitration</keyword>
<keyword id="KW-1185">Reference proteome</keyword>
<keyword id="KW-0770">Synapse</keyword>
<keyword id="KW-0812">Transmembrane</keyword>
<keyword id="KW-1133">Transmembrane helix</keyword>
<keyword id="KW-0813">Transport</keyword>
<proteinExistence type="evidence at transcript level"/>
<gene>
    <name evidence="3" type="primary">SLC32A1</name>
    <name type="synonym">VGAT</name>
    <name type="synonym">VIAAT</name>
    <name type="ORF">QccE-21148</name>
</gene>